<keyword id="KW-0456">Lyase</keyword>
<keyword id="KW-0474">Menaquinone biosynthesis</keyword>
<reference key="1">
    <citation type="journal article" date="2005" name="Nucleic Acids Res.">
        <title>Genome dynamics and diversity of Shigella species, the etiologic agents of bacillary dysentery.</title>
        <authorList>
            <person name="Yang F."/>
            <person name="Yang J."/>
            <person name="Zhang X."/>
            <person name="Chen L."/>
            <person name="Jiang Y."/>
            <person name="Yan Y."/>
            <person name="Tang X."/>
            <person name="Wang J."/>
            <person name="Xiong Z."/>
            <person name="Dong J."/>
            <person name="Xue Y."/>
            <person name="Zhu Y."/>
            <person name="Xu X."/>
            <person name="Sun L."/>
            <person name="Chen S."/>
            <person name="Nie H."/>
            <person name="Peng J."/>
            <person name="Xu J."/>
            <person name="Wang Y."/>
            <person name="Yuan Z."/>
            <person name="Wen Y."/>
            <person name="Yao Z."/>
            <person name="Shen Y."/>
            <person name="Qiang B."/>
            <person name="Hou Y."/>
            <person name="Yu J."/>
            <person name="Jin Q."/>
        </authorList>
    </citation>
    <scope>NUCLEOTIDE SEQUENCE [LARGE SCALE GENOMIC DNA]</scope>
    <source>
        <strain>Sb227</strain>
    </source>
</reference>
<gene>
    <name evidence="1" type="primary">menH</name>
    <name type="ordered locus">SBO_2300</name>
</gene>
<proteinExistence type="inferred from homology"/>
<accession>Q31YJ4</accession>
<evidence type="ECO:0000255" key="1">
    <source>
        <dbReference type="HAMAP-Rule" id="MF_01660"/>
    </source>
</evidence>
<dbReference type="EC" id="4.2.99.20" evidence="1"/>
<dbReference type="EMBL" id="CP000036">
    <property type="protein sequence ID" value="ABB66864.1"/>
    <property type="molecule type" value="Genomic_DNA"/>
</dbReference>
<dbReference type="RefSeq" id="WP_000600496.1">
    <property type="nucleotide sequence ID" value="NC_007613.1"/>
</dbReference>
<dbReference type="SMR" id="Q31YJ4"/>
<dbReference type="ESTHER" id="shifl-YFBB">
    <property type="family name" value="MenH_SHCHC"/>
</dbReference>
<dbReference type="GeneID" id="75205686"/>
<dbReference type="KEGG" id="sbo:SBO_2300"/>
<dbReference type="HOGENOM" id="CLU_020336_38_2_6"/>
<dbReference type="UniPathway" id="UPA00079"/>
<dbReference type="UniPathway" id="UPA01057">
    <property type="reaction ID" value="UER00900"/>
</dbReference>
<dbReference type="Proteomes" id="UP000007067">
    <property type="component" value="Chromosome"/>
</dbReference>
<dbReference type="GO" id="GO:0070205">
    <property type="term" value="F:2-succinyl-6-hydroxy-2,4-cyclohexadiene-1-carboxylate synthase activity"/>
    <property type="evidence" value="ECO:0007669"/>
    <property type="project" value="UniProtKB-UniRule"/>
</dbReference>
<dbReference type="GO" id="GO:0009234">
    <property type="term" value="P:menaquinone biosynthetic process"/>
    <property type="evidence" value="ECO:0007669"/>
    <property type="project" value="UniProtKB-UniRule"/>
</dbReference>
<dbReference type="FunFam" id="3.40.50.1820:FF:000038">
    <property type="entry name" value="2-succinyl-6-hydroxy-2,4-cyclohexadiene-1-carboxylate synthase"/>
    <property type="match status" value="1"/>
</dbReference>
<dbReference type="Gene3D" id="3.40.50.1820">
    <property type="entry name" value="alpha/beta hydrolase"/>
    <property type="match status" value="1"/>
</dbReference>
<dbReference type="HAMAP" id="MF_01660">
    <property type="entry name" value="MenH"/>
    <property type="match status" value="1"/>
</dbReference>
<dbReference type="InterPro" id="IPR000073">
    <property type="entry name" value="AB_hydrolase_1"/>
</dbReference>
<dbReference type="InterPro" id="IPR029058">
    <property type="entry name" value="AB_hydrolase_fold"/>
</dbReference>
<dbReference type="InterPro" id="IPR022485">
    <property type="entry name" value="SHCHC_synthase_MenH"/>
</dbReference>
<dbReference type="NCBIfam" id="TIGR03695">
    <property type="entry name" value="menH_SHCHC"/>
    <property type="match status" value="1"/>
</dbReference>
<dbReference type="NCBIfam" id="NF008340">
    <property type="entry name" value="PRK11126.1"/>
    <property type="match status" value="1"/>
</dbReference>
<dbReference type="PANTHER" id="PTHR42916">
    <property type="entry name" value="2-SUCCINYL-5-ENOLPYRUVYL-6-HYDROXY-3-CYCLOHEXENE-1-CARBOXYLATE SYNTHASE"/>
    <property type="match status" value="1"/>
</dbReference>
<dbReference type="PANTHER" id="PTHR42916:SF1">
    <property type="entry name" value="PROTEIN PHYLLO, CHLOROPLASTIC"/>
    <property type="match status" value="1"/>
</dbReference>
<dbReference type="Pfam" id="PF12697">
    <property type="entry name" value="Abhydrolase_6"/>
    <property type="match status" value="1"/>
</dbReference>
<dbReference type="SUPFAM" id="SSF53474">
    <property type="entry name" value="alpha/beta-Hydrolases"/>
    <property type="match status" value="1"/>
</dbReference>
<comment type="function">
    <text evidence="1">Catalyzes a proton abstraction reaction that results in 2,5-elimination of pyruvate from 2-succinyl-5-enolpyruvyl-6-hydroxy-3-cyclohexene-1-carboxylate (SEPHCHC) and the formation of 2-succinyl-6-hydroxy-2,4-cyclohexadiene-1-carboxylate (SHCHC).</text>
</comment>
<comment type="catalytic activity">
    <reaction evidence="1">
        <text>5-enolpyruvoyl-6-hydroxy-2-succinyl-cyclohex-3-ene-1-carboxylate = (1R,6R)-6-hydroxy-2-succinyl-cyclohexa-2,4-diene-1-carboxylate + pyruvate</text>
        <dbReference type="Rhea" id="RHEA:25597"/>
        <dbReference type="ChEBI" id="CHEBI:15361"/>
        <dbReference type="ChEBI" id="CHEBI:58689"/>
        <dbReference type="ChEBI" id="CHEBI:58818"/>
        <dbReference type="EC" id="4.2.99.20"/>
    </reaction>
</comment>
<comment type="pathway">
    <text evidence="1">Quinol/quinone metabolism; 1,4-dihydroxy-2-naphthoate biosynthesis; 1,4-dihydroxy-2-naphthoate from chorismate: step 3/7.</text>
</comment>
<comment type="pathway">
    <text evidence="1">Quinol/quinone metabolism; menaquinone biosynthesis.</text>
</comment>
<comment type="subunit">
    <text evidence="1">Monomer.</text>
</comment>
<comment type="similarity">
    <text evidence="1">Belongs to the AB hydrolase superfamily. MenH family.</text>
</comment>
<organism>
    <name type="scientific">Shigella boydii serotype 4 (strain Sb227)</name>
    <dbReference type="NCBI Taxonomy" id="300268"/>
    <lineage>
        <taxon>Bacteria</taxon>
        <taxon>Pseudomonadati</taxon>
        <taxon>Pseudomonadota</taxon>
        <taxon>Gammaproteobacteria</taxon>
        <taxon>Enterobacterales</taxon>
        <taxon>Enterobacteriaceae</taxon>
        <taxon>Shigella</taxon>
    </lineage>
</organism>
<sequence length="252" mass="27697">MILHAQAKHGKPGLPWLVFLHGFSGDCHEWQEVGEAFADYSRLYVDLPGHGGSAAISVDGFDDVTDLLRKTLVSYNILDFWLVGYSLGGRVAMMAACQGLAGLCGVIVEGGHPGLQNAEQRAERQRSDRQWAQRFRTEPLTAVFADWYQQPVFASLNDDQRRELVALRSNNNGATLAAMLEATSLAVQPDLRANLSARTFAFYYLCGERDSKFRALAAELAADCHVIPRAGHNAHRENPAGVIASLAQILRF</sequence>
<feature type="chain" id="PRO_0000341924" description="2-succinyl-6-hydroxy-2,4-cyclohexadiene-1-carboxylate synthase">
    <location>
        <begin position="1"/>
        <end position="252"/>
    </location>
</feature>
<name>MENH_SHIBS</name>
<protein>
    <recommendedName>
        <fullName evidence="1">2-succinyl-6-hydroxy-2,4-cyclohexadiene-1-carboxylate synthase</fullName>
        <shortName evidence="1">SHCHC synthase</shortName>
        <ecNumber evidence="1">4.2.99.20</ecNumber>
    </recommendedName>
</protein>